<evidence type="ECO:0000250" key="1"/>
<organism>
    <name type="scientific">Candida glabrata (strain ATCC 2001 / BCRC 20586 / JCM 3761 / NBRC 0622 / NRRL Y-65 / CBS 138)</name>
    <name type="common">Yeast</name>
    <name type="synonym">Nakaseomyces glabratus</name>
    <dbReference type="NCBI Taxonomy" id="284593"/>
    <lineage>
        <taxon>Eukaryota</taxon>
        <taxon>Fungi</taxon>
        <taxon>Dikarya</taxon>
        <taxon>Ascomycota</taxon>
        <taxon>Saccharomycotina</taxon>
        <taxon>Saccharomycetes</taxon>
        <taxon>Saccharomycetales</taxon>
        <taxon>Saccharomycetaceae</taxon>
        <taxon>Nakaseomyces</taxon>
    </lineage>
</organism>
<protein>
    <recommendedName>
        <fullName>Protein BUR2</fullName>
    </recommendedName>
</protein>
<feature type="chain" id="PRO_0000076184" description="Protein BUR2">
    <location>
        <begin position="1"/>
        <end position="357"/>
    </location>
</feature>
<name>BUR2_CANGA</name>
<comment type="function">
    <text evidence="1">Component of the BUR kinase complex involved in transcription regulation. This complex phosphorylates the UBC2/RAD6 ubiquitin-conjugating enzyme (E2), leading to monoubiquitination of histone H2B and the silencing of telomeric-associated genes. Also required for histone H3 methylation. Necessary for the recovery from pheromone-induced growth arrest in the cell cycle G1 phase. The kinase activity of the complex requires the presence of BUR2. Overexpression of BUR2 interferes with mitotic chromosome segregation (By similarity).</text>
</comment>
<comment type="subunit">
    <text evidence="1">Belongs to the BUR kinase complex.</text>
</comment>
<comment type="subcellular location">
    <subcellularLocation>
        <location evidence="1">Nucleus</location>
    </subcellularLocation>
</comment>
<gene>
    <name type="primary">BUR2</name>
    <name type="ordered locus">CAGL0C01177g</name>
</gene>
<keyword id="KW-0131">Cell cycle</keyword>
<keyword id="KW-0539">Nucleus</keyword>
<keyword id="KW-1185">Reference proteome</keyword>
<keyword id="KW-0804">Transcription</keyword>
<keyword id="KW-0805">Transcription regulation</keyword>
<sequence>MDEQTGTFNPRVLWPDVIRLPQNRWIFTCKEIIDRLGTDVHKTAEMKKLMEKCLMYLYFMKKSLNLFDYTYVEASILFFRYWYYYGLSYNLLDSIHISQAILVTACKTMENNRPIDAYVKSTCEFVTIHKIPVGNAGPRPNMDKLKWEFRDRLVKNEKKLLCQFGFDFNDGVGNARELIEEIFSGFYRFNRDDILPDEFKKTAFPKILQESRMFIVQGMTQPVTLLCDGYKFVVMSLIYCGLEYKRLVDKNFRYPKNFFSRVLLPSLKFNTQELVETFMDYRILEDNFFDLKSNKGSKLHISEEMIRNITDEDNDFCHSNEELFDYEHIREGNVSKEFMEHIQSKVDAMYEKYKTKV</sequence>
<dbReference type="EMBL" id="CR380949">
    <property type="protein sequence ID" value="CAG58131.1"/>
    <property type="molecule type" value="Genomic_DNA"/>
</dbReference>
<dbReference type="RefSeq" id="XP_445225.1">
    <property type="nucleotide sequence ID" value="XM_445225.1"/>
</dbReference>
<dbReference type="SMR" id="Q6FX19"/>
<dbReference type="FunCoup" id="Q6FX19">
    <property type="interactions" value="136"/>
</dbReference>
<dbReference type="STRING" id="284593.Q6FX19"/>
<dbReference type="EnsemblFungi" id="CAGL0C01177g-T">
    <property type="protein sequence ID" value="CAGL0C01177g-T-p1"/>
    <property type="gene ID" value="CAGL0C01177g"/>
</dbReference>
<dbReference type="KEGG" id="cgr:2886787"/>
<dbReference type="CGD" id="CAL0127574">
    <property type="gene designation" value="CAGL0C01177g"/>
</dbReference>
<dbReference type="VEuPathDB" id="FungiDB:B1J91_C01177g"/>
<dbReference type="VEuPathDB" id="FungiDB:CAGL0C01177g"/>
<dbReference type="eggNOG" id="ENOG502QQE8">
    <property type="taxonomic scope" value="Eukaryota"/>
</dbReference>
<dbReference type="HOGENOM" id="CLU_698596_0_0_1"/>
<dbReference type="InParanoid" id="Q6FX19"/>
<dbReference type="OMA" id="LFFRYWY"/>
<dbReference type="Proteomes" id="UP000002428">
    <property type="component" value="Chromosome C"/>
</dbReference>
<dbReference type="GO" id="GO:0000307">
    <property type="term" value="C:cyclin-dependent protein kinase holoenzyme complex"/>
    <property type="evidence" value="ECO:0007669"/>
    <property type="project" value="EnsemblFungi"/>
</dbReference>
<dbReference type="GO" id="GO:0005634">
    <property type="term" value="C:nucleus"/>
    <property type="evidence" value="ECO:0007669"/>
    <property type="project" value="UniProtKB-SubCell"/>
</dbReference>
<dbReference type="GO" id="GO:0016538">
    <property type="term" value="F:cyclin-dependent protein serine/threonine kinase regulator activity"/>
    <property type="evidence" value="ECO:0007669"/>
    <property type="project" value="EnsemblFungi"/>
</dbReference>
<dbReference type="GO" id="GO:0006353">
    <property type="term" value="P:DNA-templated transcription termination"/>
    <property type="evidence" value="ECO:0007669"/>
    <property type="project" value="EnsemblFungi"/>
</dbReference>
<dbReference type="GO" id="GO:0009302">
    <property type="term" value="P:sno(s)RNA transcription"/>
    <property type="evidence" value="ECO:0007669"/>
    <property type="project" value="EnsemblFungi"/>
</dbReference>
<dbReference type="GO" id="GO:0006368">
    <property type="term" value="P:transcription elongation by RNA polymerase II"/>
    <property type="evidence" value="ECO:0007669"/>
    <property type="project" value="EnsemblFungi"/>
</dbReference>
<dbReference type="Gene3D" id="1.10.472.10">
    <property type="entry name" value="Cyclin-like"/>
    <property type="match status" value="1"/>
</dbReference>
<dbReference type="InterPro" id="IPR036915">
    <property type="entry name" value="Cyclin-like_sf"/>
</dbReference>
<dbReference type="SUPFAM" id="SSF47954">
    <property type="entry name" value="Cyclin-like"/>
    <property type="match status" value="1"/>
</dbReference>
<reference key="1">
    <citation type="journal article" date="2004" name="Nature">
        <title>Genome evolution in yeasts.</title>
        <authorList>
            <person name="Dujon B."/>
            <person name="Sherman D."/>
            <person name="Fischer G."/>
            <person name="Durrens P."/>
            <person name="Casaregola S."/>
            <person name="Lafontaine I."/>
            <person name="de Montigny J."/>
            <person name="Marck C."/>
            <person name="Neuveglise C."/>
            <person name="Talla E."/>
            <person name="Goffard N."/>
            <person name="Frangeul L."/>
            <person name="Aigle M."/>
            <person name="Anthouard V."/>
            <person name="Babour A."/>
            <person name="Barbe V."/>
            <person name="Barnay S."/>
            <person name="Blanchin S."/>
            <person name="Beckerich J.-M."/>
            <person name="Beyne E."/>
            <person name="Bleykasten C."/>
            <person name="Boisrame A."/>
            <person name="Boyer J."/>
            <person name="Cattolico L."/>
            <person name="Confanioleri F."/>
            <person name="de Daruvar A."/>
            <person name="Despons L."/>
            <person name="Fabre E."/>
            <person name="Fairhead C."/>
            <person name="Ferry-Dumazet H."/>
            <person name="Groppi A."/>
            <person name="Hantraye F."/>
            <person name="Hennequin C."/>
            <person name="Jauniaux N."/>
            <person name="Joyet P."/>
            <person name="Kachouri R."/>
            <person name="Kerrest A."/>
            <person name="Koszul R."/>
            <person name="Lemaire M."/>
            <person name="Lesur I."/>
            <person name="Ma L."/>
            <person name="Muller H."/>
            <person name="Nicaud J.-M."/>
            <person name="Nikolski M."/>
            <person name="Oztas S."/>
            <person name="Ozier-Kalogeropoulos O."/>
            <person name="Pellenz S."/>
            <person name="Potier S."/>
            <person name="Richard G.-F."/>
            <person name="Straub M.-L."/>
            <person name="Suleau A."/>
            <person name="Swennen D."/>
            <person name="Tekaia F."/>
            <person name="Wesolowski-Louvel M."/>
            <person name="Westhof E."/>
            <person name="Wirth B."/>
            <person name="Zeniou-Meyer M."/>
            <person name="Zivanovic Y."/>
            <person name="Bolotin-Fukuhara M."/>
            <person name="Thierry A."/>
            <person name="Bouchier C."/>
            <person name="Caudron B."/>
            <person name="Scarpelli C."/>
            <person name="Gaillardin C."/>
            <person name="Weissenbach J."/>
            <person name="Wincker P."/>
            <person name="Souciet J.-L."/>
        </authorList>
    </citation>
    <scope>NUCLEOTIDE SEQUENCE [LARGE SCALE GENOMIC DNA]</scope>
    <source>
        <strain>ATCC 2001 / BCRC 20586 / JCM 3761 / NBRC 0622 / NRRL Y-65 / CBS 138</strain>
    </source>
</reference>
<proteinExistence type="inferred from homology"/>
<accession>Q6FX19</accession>